<protein>
    <recommendedName>
        <fullName evidence="1">Probable nicotinate-nucleotide adenylyltransferase</fullName>
        <ecNumber evidence="1">2.7.7.18</ecNumber>
    </recommendedName>
    <alternativeName>
        <fullName evidence="1">Deamido-NAD(+) diphosphorylase</fullName>
    </alternativeName>
    <alternativeName>
        <fullName evidence="1">Deamido-NAD(+) pyrophosphorylase</fullName>
    </alternativeName>
    <alternativeName>
        <fullName evidence="1">Nicotinate mononucleotide adenylyltransferase</fullName>
        <shortName evidence="1">NaMN adenylyltransferase</shortName>
    </alternativeName>
</protein>
<evidence type="ECO:0000255" key="1">
    <source>
        <dbReference type="HAMAP-Rule" id="MF_00244"/>
    </source>
</evidence>
<organism>
    <name type="scientific">Laribacter hongkongensis (strain HLHK9)</name>
    <dbReference type="NCBI Taxonomy" id="557598"/>
    <lineage>
        <taxon>Bacteria</taxon>
        <taxon>Pseudomonadati</taxon>
        <taxon>Pseudomonadota</taxon>
        <taxon>Betaproteobacteria</taxon>
        <taxon>Neisseriales</taxon>
        <taxon>Aquaspirillaceae</taxon>
        <taxon>Laribacter</taxon>
    </lineage>
</organism>
<proteinExistence type="inferred from homology"/>
<sequence length="220" mass="23663">MTVLPRVAIGLFGGSFDPVHEGHLRLARALRDELQLAEVRLLPAGTPPHRAPLAAAAADRLAMLRLALAGEPGLTVDERELSGRLSGYTVDTLAMIRRETGPEAALWWLVGGDQLASLDRWHRWRDLFGLAHLAVAVRPGFDAGSLPPAVAAEWQARQATDFANLPPAGRIRALSLSPVDISATAIRADLARGGDGLGHLAPAVRDYIHLHRLYRSESPA</sequence>
<gene>
    <name evidence="1" type="primary">nadD</name>
    <name type="ordered locus">LHK_00143</name>
</gene>
<comment type="function">
    <text evidence="1">Catalyzes the reversible adenylation of nicotinate mononucleotide (NaMN) to nicotinic acid adenine dinucleotide (NaAD).</text>
</comment>
<comment type="catalytic activity">
    <reaction evidence="1">
        <text>nicotinate beta-D-ribonucleotide + ATP + H(+) = deamido-NAD(+) + diphosphate</text>
        <dbReference type="Rhea" id="RHEA:22860"/>
        <dbReference type="ChEBI" id="CHEBI:15378"/>
        <dbReference type="ChEBI" id="CHEBI:30616"/>
        <dbReference type="ChEBI" id="CHEBI:33019"/>
        <dbReference type="ChEBI" id="CHEBI:57502"/>
        <dbReference type="ChEBI" id="CHEBI:58437"/>
        <dbReference type="EC" id="2.7.7.18"/>
    </reaction>
</comment>
<comment type="pathway">
    <text evidence="1">Cofactor biosynthesis; NAD(+) biosynthesis; deamido-NAD(+) from nicotinate D-ribonucleotide: step 1/1.</text>
</comment>
<comment type="similarity">
    <text evidence="1">Belongs to the NadD family.</text>
</comment>
<feature type="chain" id="PRO_1000125352" description="Probable nicotinate-nucleotide adenylyltransferase">
    <location>
        <begin position="1"/>
        <end position="220"/>
    </location>
</feature>
<name>NADD_LARHH</name>
<reference key="1">
    <citation type="journal article" date="2009" name="PLoS Genet.">
        <title>The complete genome and proteome of Laribacter hongkongensis reveal potential mechanisms for adaptations to different temperatures and habitats.</title>
        <authorList>
            <person name="Woo P.C.Y."/>
            <person name="Lau S.K.P."/>
            <person name="Tse H."/>
            <person name="Teng J.L.L."/>
            <person name="Curreem S.O."/>
            <person name="Tsang A.K.L."/>
            <person name="Fan R.Y.Y."/>
            <person name="Wong G.K.M."/>
            <person name="Huang Y."/>
            <person name="Loman N.J."/>
            <person name="Snyder L.A.S."/>
            <person name="Cai J.J."/>
            <person name="Huang J.-D."/>
            <person name="Mak W."/>
            <person name="Pallen M.J."/>
            <person name="Lok S."/>
            <person name="Yuen K.-Y."/>
        </authorList>
    </citation>
    <scope>NUCLEOTIDE SEQUENCE [LARGE SCALE GENOMIC DNA]</scope>
    <source>
        <strain>HLHK9</strain>
    </source>
</reference>
<accession>C1DA26</accession>
<dbReference type="EC" id="2.7.7.18" evidence="1"/>
<dbReference type="EMBL" id="CP001154">
    <property type="protein sequence ID" value="ACO73139.1"/>
    <property type="molecule type" value="Genomic_DNA"/>
</dbReference>
<dbReference type="RefSeq" id="WP_012695634.1">
    <property type="nucleotide sequence ID" value="NC_012559.1"/>
</dbReference>
<dbReference type="SMR" id="C1DA26"/>
<dbReference type="STRING" id="557598.LHK_00143"/>
<dbReference type="KEGG" id="lhk:LHK_00143"/>
<dbReference type="eggNOG" id="COG1057">
    <property type="taxonomic scope" value="Bacteria"/>
</dbReference>
<dbReference type="HOGENOM" id="CLU_069765_0_0_4"/>
<dbReference type="UniPathway" id="UPA00253">
    <property type="reaction ID" value="UER00332"/>
</dbReference>
<dbReference type="Proteomes" id="UP000002010">
    <property type="component" value="Chromosome"/>
</dbReference>
<dbReference type="GO" id="GO:0005524">
    <property type="term" value="F:ATP binding"/>
    <property type="evidence" value="ECO:0007669"/>
    <property type="project" value="UniProtKB-KW"/>
</dbReference>
<dbReference type="GO" id="GO:0004515">
    <property type="term" value="F:nicotinate-nucleotide adenylyltransferase activity"/>
    <property type="evidence" value="ECO:0007669"/>
    <property type="project" value="UniProtKB-UniRule"/>
</dbReference>
<dbReference type="GO" id="GO:0009435">
    <property type="term" value="P:NAD biosynthetic process"/>
    <property type="evidence" value="ECO:0007669"/>
    <property type="project" value="UniProtKB-UniRule"/>
</dbReference>
<dbReference type="CDD" id="cd02165">
    <property type="entry name" value="NMNAT"/>
    <property type="match status" value="1"/>
</dbReference>
<dbReference type="Gene3D" id="3.40.50.620">
    <property type="entry name" value="HUPs"/>
    <property type="match status" value="1"/>
</dbReference>
<dbReference type="HAMAP" id="MF_00244">
    <property type="entry name" value="NaMN_adenylyltr"/>
    <property type="match status" value="1"/>
</dbReference>
<dbReference type="InterPro" id="IPR004821">
    <property type="entry name" value="Cyt_trans-like"/>
</dbReference>
<dbReference type="InterPro" id="IPR005248">
    <property type="entry name" value="NadD/NMNAT"/>
</dbReference>
<dbReference type="InterPro" id="IPR014729">
    <property type="entry name" value="Rossmann-like_a/b/a_fold"/>
</dbReference>
<dbReference type="NCBIfam" id="TIGR00125">
    <property type="entry name" value="cyt_tran_rel"/>
    <property type="match status" value="1"/>
</dbReference>
<dbReference type="NCBIfam" id="TIGR00482">
    <property type="entry name" value="nicotinate (nicotinamide) nucleotide adenylyltransferase"/>
    <property type="match status" value="1"/>
</dbReference>
<dbReference type="NCBIfam" id="NF000839">
    <property type="entry name" value="PRK00071.1-1"/>
    <property type="match status" value="1"/>
</dbReference>
<dbReference type="PANTHER" id="PTHR39321">
    <property type="entry name" value="NICOTINATE-NUCLEOTIDE ADENYLYLTRANSFERASE-RELATED"/>
    <property type="match status" value="1"/>
</dbReference>
<dbReference type="PANTHER" id="PTHR39321:SF3">
    <property type="entry name" value="PHOSPHOPANTETHEINE ADENYLYLTRANSFERASE"/>
    <property type="match status" value="1"/>
</dbReference>
<dbReference type="Pfam" id="PF01467">
    <property type="entry name" value="CTP_transf_like"/>
    <property type="match status" value="1"/>
</dbReference>
<dbReference type="SUPFAM" id="SSF52374">
    <property type="entry name" value="Nucleotidylyl transferase"/>
    <property type="match status" value="1"/>
</dbReference>
<keyword id="KW-0067">ATP-binding</keyword>
<keyword id="KW-0520">NAD</keyword>
<keyword id="KW-0547">Nucleotide-binding</keyword>
<keyword id="KW-0548">Nucleotidyltransferase</keyword>
<keyword id="KW-0662">Pyridine nucleotide biosynthesis</keyword>
<keyword id="KW-1185">Reference proteome</keyword>
<keyword id="KW-0808">Transferase</keyword>